<sequence>MSEPEVTYSTVRLHKSSRLQKLVRHEETQGPREAGYRKCSVCWQLIVKALGILCFLLLITVAVLAVKIFQYGQHNQEIHETLNYHHNCSNMQSDFNLKEEMLTNRSIDSRPGNELLESLNREQNRGYSETKTDLDSSQDTGTGVKYWFCYRTKCYYFIMNKNTWSGCKQNCQHYSLPLVKIDDENELKFLQFQVIPDSYWIGLSYDKEKKEWAWIDNGQSKLDMKIRKMNFKPGGCVFLSKRRLEDTNCKNSHYCICGKKLDKFPH</sequence>
<name>KLRA6_MOUSE</name>
<keyword id="KW-0130">Cell adhesion</keyword>
<keyword id="KW-1015">Disulfide bond</keyword>
<keyword id="KW-0325">Glycoprotein</keyword>
<keyword id="KW-0430">Lectin</keyword>
<keyword id="KW-0472">Membrane</keyword>
<keyword id="KW-0675">Receptor</keyword>
<keyword id="KW-1185">Reference proteome</keyword>
<keyword id="KW-0735">Signal-anchor</keyword>
<keyword id="KW-0812">Transmembrane</keyword>
<keyword id="KW-1133">Transmembrane helix</keyword>
<dbReference type="EMBL" id="U10092">
    <property type="protein sequence ID" value="AAA50220.1"/>
    <property type="molecule type" value="mRNA"/>
</dbReference>
<dbReference type="CCDS" id="CCDS20597.1"/>
<dbReference type="PIR" id="I49051">
    <property type="entry name" value="I49051"/>
</dbReference>
<dbReference type="RefSeq" id="NP_032490.1">
    <property type="nucleotide sequence ID" value="NM_008464.3"/>
</dbReference>
<dbReference type="RefSeq" id="XP_006505712.1">
    <property type="nucleotide sequence ID" value="XM_006505649.1"/>
</dbReference>
<dbReference type="RefSeq" id="XP_006505713.1">
    <property type="nucleotide sequence ID" value="XM_006505650.3"/>
</dbReference>
<dbReference type="SMR" id="Q60653"/>
<dbReference type="FunCoup" id="Q60653">
    <property type="interactions" value="454"/>
</dbReference>
<dbReference type="STRING" id="10090.ENSMUSP00000073700"/>
<dbReference type="GlyCosmos" id="Q60653">
    <property type="glycosylation" value="2 sites, No reported glycans"/>
</dbReference>
<dbReference type="GlyGen" id="Q60653">
    <property type="glycosylation" value="2 sites"/>
</dbReference>
<dbReference type="PaxDb" id="10090-ENSMUSP00000073700"/>
<dbReference type="DNASU" id="16637"/>
<dbReference type="Ensembl" id="ENSMUST00000074056.3">
    <property type="protein sequence ID" value="ENSMUSP00000073700.3"/>
    <property type="gene ID" value="ENSMUSG00000061769.3"/>
</dbReference>
<dbReference type="GeneID" id="16637"/>
<dbReference type="KEGG" id="mmu:16637"/>
<dbReference type="UCSC" id="uc009ehe.1">
    <property type="organism name" value="mouse"/>
</dbReference>
<dbReference type="AGR" id="MGI:101902"/>
<dbReference type="CTD" id="16637"/>
<dbReference type="MGI" id="MGI:101902">
    <property type="gene designation" value="Klra6"/>
</dbReference>
<dbReference type="VEuPathDB" id="HostDB:ENSMUSG00000061769"/>
<dbReference type="eggNOG" id="KOG4297">
    <property type="taxonomic scope" value="Eukaryota"/>
</dbReference>
<dbReference type="GeneTree" id="ENSGT00390000008117"/>
<dbReference type="HOGENOM" id="CLU_049894_1_0_1"/>
<dbReference type="InParanoid" id="Q60653"/>
<dbReference type="OMA" id="NSHYCIC"/>
<dbReference type="OrthoDB" id="2142683at2759"/>
<dbReference type="PhylomeDB" id="Q60653"/>
<dbReference type="TreeFam" id="TF336674"/>
<dbReference type="BioGRID-ORCS" id="16637">
    <property type="hits" value="0 hits in 56 CRISPR screens"/>
</dbReference>
<dbReference type="PRO" id="PR:Q60653"/>
<dbReference type="Proteomes" id="UP000000589">
    <property type="component" value="Chromosome 6"/>
</dbReference>
<dbReference type="RNAct" id="Q60653">
    <property type="molecule type" value="protein"/>
</dbReference>
<dbReference type="Bgee" id="ENSMUSG00000061769">
    <property type="expression patterns" value="Expressed in soleus muscle and 18 other cell types or tissues"/>
</dbReference>
<dbReference type="GO" id="GO:0005886">
    <property type="term" value="C:plasma membrane"/>
    <property type="evidence" value="ECO:0000304"/>
    <property type="project" value="MGI"/>
</dbReference>
<dbReference type="GO" id="GO:0030246">
    <property type="term" value="F:carbohydrate binding"/>
    <property type="evidence" value="ECO:0007669"/>
    <property type="project" value="UniProtKB-KW"/>
</dbReference>
<dbReference type="GO" id="GO:0007155">
    <property type="term" value="P:cell adhesion"/>
    <property type="evidence" value="ECO:0007669"/>
    <property type="project" value="UniProtKB-KW"/>
</dbReference>
<dbReference type="CDD" id="cd03593">
    <property type="entry name" value="CLECT_NK_receptors_like"/>
    <property type="match status" value="1"/>
</dbReference>
<dbReference type="FunFam" id="3.10.100.10:FF:000053">
    <property type="entry name" value="Killer cell lectin-like receptor 3"/>
    <property type="match status" value="1"/>
</dbReference>
<dbReference type="Gene3D" id="3.10.100.10">
    <property type="entry name" value="Mannose-Binding Protein A, subunit A"/>
    <property type="match status" value="1"/>
</dbReference>
<dbReference type="InterPro" id="IPR001304">
    <property type="entry name" value="C-type_lectin-like"/>
</dbReference>
<dbReference type="InterPro" id="IPR016186">
    <property type="entry name" value="C-type_lectin-like/link_sf"/>
</dbReference>
<dbReference type="InterPro" id="IPR016187">
    <property type="entry name" value="CTDL_fold"/>
</dbReference>
<dbReference type="InterPro" id="IPR013600">
    <property type="entry name" value="Ly49_N"/>
</dbReference>
<dbReference type="InterPro" id="IPR052013">
    <property type="entry name" value="Mouse_KLRs"/>
</dbReference>
<dbReference type="InterPro" id="IPR033992">
    <property type="entry name" value="NKR-like_CTLD"/>
</dbReference>
<dbReference type="PANTHER" id="PTHR46329">
    <property type="entry name" value="KILLER CELL LECTIN-LIKE RECEPTOR 2"/>
    <property type="match status" value="1"/>
</dbReference>
<dbReference type="PANTHER" id="PTHR46329:SF3">
    <property type="entry name" value="KILLER CELL LECTIN-LIKE RECEPTOR 3-RELATED"/>
    <property type="match status" value="1"/>
</dbReference>
<dbReference type="Pfam" id="PF00059">
    <property type="entry name" value="Lectin_C"/>
    <property type="match status" value="1"/>
</dbReference>
<dbReference type="Pfam" id="PF08391">
    <property type="entry name" value="Ly49"/>
    <property type="match status" value="1"/>
</dbReference>
<dbReference type="SMART" id="SM00034">
    <property type="entry name" value="CLECT"/>
    <property type="match status" value="1"/>
</dbReference>
<dbReference type="SUPFAM" id="SSF56436">
    <property type="entry name" value="C-type lectin-like"/>
    <property type="match status" value="1"/>
</dbReference>
<dbReference type="PROSITE" id="PS50041">
    <property type="entry name" value="C_TYPE_LECTIN_2"/>
    <property type="match status" value="1"/>
</dbReference>
<gene>
    <name type="primary">Klra6</name>
    <name type="synonym">Ly-49f</name>
    <name type="synonym">Ly49-f</name>
    <name type="synonym">Ly49F</name>
</gene>
<protein>
    <recommendedName>
        <fullName>Killer cell lectin-like receptor 6</fullName>
    </recommendedName>
    <alternativeName>
        <fullName>Lymphocyte antigen 49f</fullName>
        <shortName>Ly-49f</shortName>
    </alternativeName>
    <alternativeName>
        <fullName>T-cell surface glycoprotein Ly-49F</fullName>
    </alternativeName>
</protein>
<reference key="1">
    <citation type="journal article" date="1994" name="J. Immunol.">
        <title>Ly-49 multigene family expressed by IL-2-activated NK cells.</title>
        <authorList>
            <person name="Smith H.R.C."/>
            <person name="Karlhofer F.M."/>
            <person name="Yokoyama W.M."/>
        </authorList>
    </citation>
    <scope>NUCLEOTIDE SEQUENCE [MRNA]</scope>
    <source>
        <strain>C57BL/6J</strain>
        <tissue>Spleen</tissue>
    </source>
</reference>
<proteinExistence type="evidence at transcript level"/>
<feature type="chain" id="PRO_0000046684" description="Killer cell lectin-like receptor 6">
    <location>
        <begin position="1"/>
        <end position="266"/>
    </location>
</feature>
<feature type="topological domain" description="Cytoplasmic" evidence="1">
    <location>
        <begin position="1"/>
        <end position="44"/>
    </location>
</feature>
<feature type="transmembrane region" description="Helical; Signal-anchor for type II membrane protein" evidence="1">
    <location>
        <begin position="45"/>
        <end position="66"/>
    </location>
</feature>
<feature type="topological domain" description="Extracellular" evidence="1">
    <location>
        <begin position="67"/>
        <end position="266"/>
    </location>
</feature>
<feature type="domain" description="C-type lectin" evidence="2">
    <location>
        <begin position="143"/>
        <end position="261"/>
    </location>
</feature>
<feature type="glycosylation site" description="N-linked (GlcNAc...) asparagine" evidence="1">
    <location>
        <position position="87"/>
    </location>
</feature>
<feature type="glycosylation site" description="N-linked (GlcNAc...) asparagine" evidence="1">
    <location>
        <position position="104"/>
    </location>
</feature>
<feature type="disulfide bond" evidence="2">
    <location>
        <begin position="149"/>
        <end position="154"/>
    </location>
</feature>
<feature type="disulfide bond" evidence="2">
    <location>
        <begin position="167"/>
        <end position="255"/>
    </location>
</feature>
<feature type="disulfide bond" evidence="2">
    <location>
        <begin position="171"/>
        <end position="257"/>
    </location>
</feature>
<feature type="disulfide bond" evidence="2">
    <location>
        <begin position="236"/>
        <end position="249"/>
    </location>
</feature>
<organism>
    <name type="scientific">Mus musculus</name>
    <name type="common">Mouse</name>
    <dbReference type="NCBI Taxonomy" id="10090"/>
    <lineage>
        <taxon>Eukaryota</taxon>
        <taxon>Metazoa</taxon>
        <taxon>Chordata</taxon>
        <taxon>Craniata</taxon>
        <taxon>Vertebrata</taxon>
        <taxon>Euteleostomi</taxon>
        <taxon>Mammalia</taxon>
        <taxon>Eutheria</taxon>
        <taxon>Euarchontoglires</taxon>
        <taxon>Glires</taxon>
        <taxon>Rodentia</taxon>
        <taxon>Myomorpha</taxon>
        <taxon>Muroidea</taxon>
        <taxon>Muridae</taxon>
        <taxon>Murinae</taxon>
        <taxon>Mus</taxon>
        <taxon>Mus</taxon>
    </lineage>
</organism>
<accession>Q60653</accession>
<evidence type="ECO:0000255" key="1"/>
<evidence type="ECO:0000255" key="2">
    <source>
        <dbReference type="PROSITE-ProRule" id="PRU00040"/>
    </source>
</evidence>
<comment type="function">
    <text>Receptor on natural killer (NK) cells for class I MHC.</text>
</comment>
<comment type="subunit">
    <text>Homodimer; disulfide-linked.</text>
</comment>
<comment type="subcellular location">
    <subcellularLocation>
        <location>Membrane</location>
        <topology>Single-pass type II membrane protein</topology>
    </subcellularLocation>
</comment>